<evidence type="ECO:0000255" key="1">
    <source>
        <dbReference type="HAMAP-Rule" id="MF_01367"/>
    </source>
</evidence>
<evidence type="ECO:0000305" key="2"/>
<gene>
    <name evidence="1" type="primary">rplN</name>
    <name evidence="1" type="synonym">rpl14</name>
    <name type="ordered locus">PCC7424_3713</name>
</gene>
<feature type="chain" id="PRO_1000144253" description="Large ribosomal subunit protein uL14">
    <location>
        <begin position="1"/>
        <end position="122"/>
    </location>
</feature>
<keyword id="KW-1185">Reference proteome</keyword>
<keyword id="KW-0687">Ribonucleoprotein</keyword>
<keyword id="KW-0689">Ribosomal protein</keyword>
<keyword id="KW-0694">RNA-binding</keyword>
<keyword id="KW-0699">rRNA-binding</keyword>
<name>RL14_GLOC7</name>
<protein>
    <recommendedName>
        <fullName evidence="1">Large ribosomal subunit protein uL14</fullName>
    </recommendedName>
    <alternativeName>
        <fullName evidence="2">50S ribosomal protein L14</fullName>
    </alternativeName>
</protein>
<accession>B7KHZ7</accession>
<proteinExistence type="inferred from homology"/>
<comment type="function">
    <text evidence="1">Binds to 23S rRNA. Forms part of two intersubunit bridges in the 70S ribosome.</text>
</comment>
<comment type="subunit">
    <text evidence="1">Part of the 50S ribosomal subunit. Forms a cluster with proteins L3 and L19. In the 70S ribosome, L14 and L19 interact and together make contacts with the 16S rRNA in bridges B5 and B8.</text>
</comment>
<comment type="similarity">
    <text evidence="1">Belongs to the universal ribosomal protein uL14 family.</text>
</comment>
<reference key="1">
    <citation type="journal article" date="2011" name="MBio">
        <title>Novel metabolic attributes of the genus Cyanothece, comprising a group of unicellular nitrogen-fixing Cyanobacteria.</title>
        <authorList>
            <person name="Bandyopadhyay A."/>
            <person name="Elvitigala T."/>
            <person name="Welsh E."/>
            <person name="Stockel J."/>
            <person name="Liberton M."/>
            <person name="Min H."/>
            <person name="Sherman L.A."/>
            <person name="Pakrasi H.B."/>
        </authorList>
    </citation>
    <scope>NUCLEOTIDE SEQUENCE [LARGE SCALE GENOMIC DNA]</scope>
    <source>
        <strain>PCC 7424</strain>
    </source>
</reference>
<dbReference type="EMBL" id="CP001291">
    <property type="protein sequence ID" value="ACK72094.1"/>
    <property type="molecule type" value="Genomic_DNA"/>
</dbReference>
<dbReference type="RefSeq" id="WP_015955687.1">
    <property type="nucleotide sequence ID" value="NC_011729.1"/>
</dbReference>
<dbReference type="SMR" id="B7KHZ7"/>
<dbReference type="STRING" id="65393.PCC7424_3713"/>
<dbReference type="KEGG" id="cyc:PCC7424_3713"/>
<dbReference type="eggNOG" id="COG0093">
    <property type="taxonomic scope" value="Bacteria"/>
</dbReference>
<dbReference type="HOGENOM" id="CLU_095071_2_1_3"/>
<dbReference type="OrthoDB" id="9806379at2"/>
<dbReference type="Proteomes" id="UP000002384">
    <property type="component" value="Chromosome"/>
</dbReference>
<dbReference type="GO" id="GO:0022625">
    <property type="term" value="C:cytosolic large ribosomal subunit"/>
    <property type="evidence" value="ECO:0007669"/>
    <property type="project" value="TreeGrafter"/>
</dbReference>
<dbReference type="GO" id="GO:0070180">
    <property type="term" value="F:large ribosomal subunit rRNA binding"/>
    <property type="evidence" value="ECO:0007669"/>
    <property type="project" value="TreeGrafter"/>
</dbReference>
<dbReference type="GO" id="GO:0003735">
    <property type="term" value="F:structural constituent of ribosome"/>
    <property type="evidence" value="ECO:0007669"/>
    <property type="project" value="InterPro"/>
</dbReference>
<dbReference type="GO" id="GO:0006412">
    <property type="term" value="P:translation"/>
    <property type="evidence" value="ECO:0007669"/>
    <property type="project" value="UniProtKB-UniRule"/>
</dbReference>
<dbReference type="CDD" id="cd00337">
    <property type="entry name" value="Ribosomal_uL14"/>
    <property type="match status" value="1"/>
</dbReference>
<dbReference type="FunFam" id="2.40.150.20:FF:000001">
    <property type="entry name" value="50S ribosomal protein L14"/>
    <property type="match status" value="1"/>
</dbReference>
<dbReference type="Gene3D" id="2.40.150.20">
    <property type="entry name" value="Ribosomal protein L14"/>
    <property type="match status" value="1"/>
</dbReference>
<dbReference type="HAMAP" id="MF_01367">
    <property type="entry name" value="Ribosomal_uL14"/>
    <property type="match status" value="1"/>
</dbReference>
<dbReference type="InterPro" id="IPR000218">
    <property type="entry name" value="Ribosomal_uL14"/>
</dbReference>
<dbReference type="InterPro" id="IPR005745">
    <property type="entry name" value="Ribosomal_uL14_bac-type"/>
</dbReference>
<dbReference type="InterPro" id="IPR019972">
    <property type="entry name" value="Ribosomal_uL14_CS"/>
</dbReference>
<dbReference type="InterPro" id="IPR036853">
    <property type="entry name" value="Ribosomal_uL14_sf"/>
</dbReference>
<dbReference type="NCBIfam" id="TIGR01067">
    <property type="entry name" value="rplN_bact"/>
    <property type="match status" value="1"/>
</dbReference>
<dbReference type="PANTHER" id="PTHR11761">
    <property type="entry name" value="50S/60S RIBOSOMAL PROTEIN L14/L23"/>
    <property type="match status" value="1"/>
</dbReference>
<dbReference type="PANTHER" id="PTHR11761:SF3">
    <property type="entry name" value="LARGE RIBOSOMAL SUBUNIT PROTEIN UL14M"/>
    <property type="match status" value="1"/>
</dbReference>
<dbReference type="Pfam" id="PF00238">
    <property type="entry name" value="Ribosomal_L14"/>
    <property type="match status" value="1"/>
</dbReference>
<dbReference type="SMART" id="SM01374">
    <property type="entry name" value="Ribosomal_L14"/>
    <property type="match status" value="1"/>
</dbReference>
<dbReference type="SUPFAM" id="SSF50193">
    <property type="entry name" value="Ribosomal protein L14"/>
    <property type="match status" value="1"/>
</dbReference>
<dbReference type="PROSITE" id="PS00049">
    <property type="entry name" value="RIBOSOMAL_L14"/>
    <property type="match status" value="1"/>
</dbReference>
<organism>
    <name type="scientific">Gloeothece citriformis (strain PCC 7424)</name>
    <name type="common">Cyanothece sp. (strain PCC 7424)</name>
    <dbReference type="NCBI Taxonomy" id="65393"/>
    <lineage>
        <taxon>Bacteria</taxon>
        <taxon>Bacillati</taxon>
        <taxon>Cyanobacteriota</taxon>
        <taxon>Cyanophyceae</taxon>
        <taxon>Oscillatoriophycideae</taxon>
        <taxon>Chroococcales</taxon>
        <taxon>Aphanothecaceae</taxon>
        <taxon>Gloeothece</taxon>
        <taxon>Gloeothece citriformis</taxon>
    </lineage>
</organism>
<sequence length="122" mass="13377">MIQQQTYLNVADNSGARKLMCLRVLGTGNCRYGGIGDEIIAVVKDAIPNMPVKKSDVVKAVIVRTRHPLRRASGMTIRFDDNAAVIINNDGNPKGTRVFGPVARELRDKNYTKIVSLAPEVL</sequence>